<keyword id="KW-0963">Cytoplasm</keyword>
<keyword id="KW-0378">Hydrolase</keyword>
<keyword id="KW-0645">Protease</keyword>
<keyword id="KW-1185">Reference proteome</keyword>
<keyword id="KW-0720">Serine protease</keyword>
<name>CLPP_FUSNN</name>
<accession>Q8RHJ8</accession>
<evidence type="ECO:0000255" key="1">
    <source>
        <dbReference type="HAMAP-Rule" id="MF_00444"/>
    </source>
</evidence>
<feature type="chain" id="PRO_0000179559" description="ATP-dependent Clp protease proteolytic subunit">
    <location>
        <begin position="1"/>
        <end position="193"/>
    </location>
</feature>
<feature type="active site" description="Nucleophile" evidence="1">
    <location>
        <position position="97"/>
    </location>
</feature>
<feature type="active site" evidence="1">
    <location>
        <position position="122"/>
    </location>
</feature>
<reference key="1">
    <citation type="journal article" date="2002" name="J. Bacteriol.">
        <title>Genome sequence and analysis of the oral bacterium Fusobacterium nucleatum strain ATCC 25586.</title>
        <authorList>
            <person name="Kapatral V."/>
            <person name="Anderson I."/>
            <person name="Ivanova N."/>
            <person name="Reznik G."/>
            <person name="Los T."/>
            <person name="Lykidis A."/>
            <person name="Bhattacharyya A."/>
            <person name="Bartman A."/>
            <person name="Gardner W."/>
            <person name="Grechkin G."/>
            <person name="Zhu L."/>
            <person name="Vasieva O."/>
            <person name="Chu L."/>
            <person name="Kogan Y."/>
            <person name="Chaga O."/>
            <person name="Goltsman E."/>
            <person name="Bernal A."/>
            <person name="Larsen N."/>
            <person name="D'Souza M."/>
            <person name="Walunas T."/>
            <person name="Pusch G."/>
            <person name="Haselkorn R."/>
            <person name="Fonstein M."/>
            <person name="Kyrpides N.C."/>
            <person name="Overbeek R."/>
        </authorList>
    </citation>
    <scope>NUCLEOTIDE SEQUENCE [LARGE SCALE GENOMIC DNA]</scope>
    <source>
        <strain>ATCC 25586 / DSM 15643 / BCRC 10681 / CIP 101130 / JCM 8532 / KCTC 2640 / LMG 13131 / VPI 4355</strain>
    </source>
</reference>
<sequence>MYNPTVIDNNGKSERAYDIYSRLLKDRIIFVGTAIDETVANSIIAQLLYLEAEDPEKDIIMYINSPGGSVTDGMAIYDTMNYIKPDVQTVCVGQAASMGAFLLAAGAKGKRFALENSRIMIHQPLISGGLKGQATDISIHANELLKIKDRLAELLAKNTGKTKEQILRDTERDNYLSSEEAVNYGLIDSVFRR</sequence>
<dbReference type="EC" id="3.4.21.92" evidence="1"/>
<dbReference type="EMBL" id="AE009951">
    <property type="protein sequence ID" value="AAL94106.1"/>
    <property type="molecule type" value="Genomic_DNA"/>
</dbReference>
<dbReference type="RefSeq" id="NP_602807.1">
    <property type="nucleotide sequence ID" value="NC_003454.1"/>
</dbReference>
<dbReference type="RefSeq" id="WP_005894880.1">
    <property type="nucleotide sequence ID" value="NZ_OZ209243.1"/>
</dbReference>
<dbReference type="SMR" id="Q8RHJ8"/>
<dbReference type="FunCoup" id="Q8RHJ8">
    <property type="interactions" value="338"/>
</dbReference>
<dbReference type="STRING" id="190304.FN2016"/>
<dbReference type="MEROPS" id="S14.001"/>
<dbReference type="PaxDb" id="190304-FN2016"/>
<dbReference type="EnsemblBacteria" id="AAL94106">
    <property type="protein sequence ID" value="AAL94106"/>
    <property type="gene ID" value="FN2016"/>
</dbReference>
<dbReference type="GeneID" id="79810802"/>
<dbReference type="KEGG" id="fnu:FN2016"/>
<dbReference type="PATRIC" id="fig|190304.8.peg.484"/>
<dbReference type="eggNOG" id="COG0740">
    <property type="taxonomic scope" value="Bacteria"/>
</dbReference>
<dbReference type="HOGENOM" id="CLU_058707_3_2_0"/>
<dbReference type="InParanoid" id="Q8RHJ8"/>
<dbReference type="BioCyc" id="FNUC190304:G1FZS-503-MONOMER"/>
<dbReference type="Proteomes" id="UP000002521">
    <property type="component" value="Chromosome"/>
</dbReference>
<dbReference type="GO" id="GO:0005737">
    <property type="term" value="C:cytoplasm"/>
    <property type="evidence" value="ECO:0007669"/>
    <property type="project" value="UniProtKB-SubCell"/>
</dbReference>
<dbReference type="GO" id="GO:0009368">
    <property type="term" value="C:endopeptidase Clp complex"/>
    <property type="evidence" value="ECO:0000318"/>
    <property type="project" value="GO_Central"/>
</dbReference>
<dbReference type="GO" id="GO:0004176">
    <property type="term" value="F:ATP-dependent peptidase activity"/>
    <property type="evidence" value="ECO:0000318"/>
    <property type="project" value="GO_Central"/>
</dbReference>
<dbReference type="GO" id="GO:0051117">
    <property type="term" value="F:ATPase binding"/>
    <property type="evidence" value="ECO:0000318"/>
    <property type="project" value="GO_Central"/>
</dbReference>
<dbReference type="GO" id="GO:0004252">
    <property type="term" value="F:serine-type endopeptidase activity"/>
    <property type="evidence" value="ECO:0000318"/>
    <property type="project" value="GO_Central"/>
</dbReference>
<dbReference type="GO" id="GO:0006515">
    <property type="term" value="P:protein quality control for misfolded or incompletely synthesized proteins"/>
    <property type="evidence" value="ECO:0000318"/>
    <property type="project" value="GO_Central"/>
</dbReference>
<dbReference type="CDD" id="cd07017">
    <property type="entry name" value="S14_ClpP_2"/>
    <property type="match status" value="1"/>
</dbReference>
<dbReference type="FunFam" id="3.90.226.10:FF:000001">
    <property type="entry name" value="ATP-dependent Clp protease proteolytic subunit"/>
    <property type="match status" value="1"/>
</dbReference>
<dbReference type="Gene3D" id="3.90.226.10">
    <property type="entry name" value="2-enoyl-CoA Hydratase, Chain A, domain 1"/>
    <property type="match status" value="1"/>
</dbReference>
<dbReference type="HAMAP" id="MF_00444">
    <property type="entry name" value="ClpP"/>
    <property type="match status" value="1"/>
</dbReference>
<dbReference type="InterPro" id="IPR001907">
    <property type="entry name" value="ClpP"/>
</dbReference>
<dbReference type="InterPro" id="IPR029045">
    <property type="entry name" value="ClpP/crotonase-like_dom_sf"/>
</dbReference>
<dbReference type="InterPro" id="IPR023562">
    <property type="entry name" value="ClpP/TepA"/>
</dbReference>
<dbReference type="InterPro" id="IPR033135">
    <property type="entry name" value="ClpP_His_AS"/>
</dbReference>
<dbReference type="InterPro" id="IPR018215">
    <property type="entry name" value="ClpP_Ser_AS"/>
</dbReference>
<dbReference type="NCBIfam" id="TIGR00493">
    <property type="entry name" value="clpP"/>
    <property type="match status" value="1"/>
</dbReference>
<dbReference type="NCBIfam" id="NF001368">
    <property type="entry name" value="PRK00277.1"/>
    <property type="match status" value="1"/>
</dbReference>
<dbReference type="NCBIfam" id="NF009205">
    <property type="entry name" value="PRK12553.1"/>
    <property type="match status" value="1"/>
</dbReference>
<dbReference type="PANTHER" id="PTHR10381">
    <property type="entry name" value="ATP-DEPENDENT CLP PROTEASE PROTEOLYTIC SUBUNIT"/>
    <property type="match status" value="1"/>
</dbReference>
<dbReference type="PANTHER" id="PTHR10381:SF70">
    <property type="entry name" value="ATP-DEPENDENT CLP PROTEASE PROTEOLYTIC SUBUNIT"/>
    <property type="match status" value="1"/>
</dbReference>
<dbReference type="Pfam" id="PF00574">
    <property type="entry name" value="CLP_protease"/>
    <property type="match status" value="1"/>
</dbReference>
<dbReference type="PRINTS" id="PR00127">
    <property type="entry name" value="CLPPROTEASEP"/>
</dbReference>
<dbReference type="SUPFAM" id="SSF52096">
    <property type="entry name" value="ClpP/crotonase"/>
    <property type="match status" value="1"/>
</dbReference>
<dbReference type="PROSITE" id="PS00382">
    <property type="entry name" value="CLP_PROTEASE_HIS"/>
    <property type="match status" value="1"/>
</dbReference>
<dbReference type="PROSITE" id="PS00381">
    <property type="entry name" value="CLP_PROTEASE_SER"/>
    <property type="match status" value="1"/>
</dbReference>
<organism>
    <name type="scientific">Fusobacterium nucleatum subsp. nucleatum (strain ATCC 25586 / DSM 15643 / BCRC 10681 / CIP 101130 / JCM 8532 / KCTC 2640 / LMG 13131 / VPI 4355)</name>
    <dbReference type="NCBI Taxonomy" id="190304"/>
    <lineage>
        <taxon>Bacteria</taxon>
        <taxon>Fusobacteriati</taxon>
        <taxon>Fusobacteriota</taxon>
        <taxon>Fusobacteriia</taxon>
        <taxon>Fusobacteriales</taxon>
        <taxon>Fusobacteriaceae</taxon>
        <taxon>Fusobacterium</taxon>
    </lineage>
</organism>
<proteinExistence type="inferred from homology"/>
<gene>
    <name evidence="1" type="primary">clpP</name>
    <name type="ordered locus">FN2016</name>
</gene>
<protein>
    <recommendedName>
        <fullName evidence="1">ATP-dependent Clp protease proteolytic subunit</fullName>
        <ecNumber evidence="1">3.4.21.92</ecNumber>
    </recommendedName>
    <alternativeName>
        <fullName evidence="1">Endopeptidase Clp</fullName>
    </alternativeName>
</protein>
<comment type="function">
    <text evidence="1">Cleaves peptides in various proteins in a process that requires ATP hydrolysis. Has a chymotrypsin-like activity. Plays a major role in the degradation of misfolded proteins.</text>
</comment>
<comment type="catalytic activity">
    <reaction evidence="1">
        <text>Hydrolysis of proteins to small peptides in the presence of ATP and magnesium. alpha-casein is the usual test substrate. In the absence of ATP, only oligopeptides shorter than five residues are hydrolyzed (such as succinyl-Leu-Tyr-|-NHMec, and Leu-Tyr-Leu-|-Tyr-Trp, in which cleavage of the -Tyr-|-Leu- and -Tyr-|-Trp bonds also occurs).</text>
        <dbReference type="EC" id="3.4.21.92"/>
    </reaction>
</comment>
<comment type="subunit">
    <text evidence="1">Fourteen ClpP subunits assemble into 2 heptameric rings which stack back to back to give a disk-like structure with a central cavity, resembling the structure of eukaryotic proteasomes.</text>
</comment>
<comment type="subcellular location">
    <subcellularLocation>
        <location evidence="1">Cytoplasm</location>
    </subcellularLocation>
</comment>
<comment type="similarity">
    <text evidence="1">Belongs to the peptidase S14 family.</text>
</comment>